<sequence>MSTSQTSADIQLIQRILPHRYPFLLVDKVVEIDGTTSALGIKNVTMNEPHFQGHFPGMPIMPGVTIVEAMAQTAAVMVGVTLEMADKEMKVYFMAIDKAKFRRKVIPGDVLEMRLNTLRGKPGGKVWRFGGVASVEGEMAAEVEFTAMMDMG</sequence>
<dbReference type="EC" id="4.2.1.59" evidence="1"/>
<dbReference type="EMBL" id="CP000362">
    <property type="protein sequence ID" value="ABG32146.1"/>
    <property type="molecule type" value="Genomic_DNA"/>
</dbReference>
<dbReference type="RefSeq" id="WP_011568763.1">
    <property type="nucleotide sequence ID" value="NC_008209.1"/>
</dbReference>
<dbReference type="SMR" id="Q166E7"/>
<dbReference type="STRING" id="375451.RD1_2595"/>
<dbReference type="KEGG" id="rde:RD1_2595"/>
<dbReference type="eggNOG" id="COG0764">
    <property type="taxonomic scope" value="Bacteria"/>
</dbReference>
<dbReference type="HOGENOM" id="CLU_078912_3_0_5"/>
<dbReference type="OrthoDB" id="9772788at2"/>
<dbReference type="Proteomes" id="UP000007029">
    <property type="component" value="Chromosome"/>
</dbReference>
<dbReference type="GO" id="GO:0005737">
    <property type="term" value="C:cytoplasm"/>
    <property type="evidence" value="ECO:0007669"/>
    <property type="project" value="UniProtKB-SubCell"/>
</dbReference>
<dbReference type="GO" id="GO:0016020">
    <property type="term" value="C:membrane"/>
    <property type="evidence" value="ECO:0007669"/>
    <property type="project" value="GOC"/>
</dbReference>
<dbReference type="GO" id="GO:0019171">
    <property type="term" value="F:(3R)-hydroxyacyl-[acyl-carrier-protein] dehydratase activity"/>
    <property type="evidence" value="ECO:0007669"/>
    <property type="project" value="UniProtKB-EC"/>
</dbReference>
<dbReference type="GO" id="GO:0006633">
    <property type="term" value="P:fatty acid biosynthetic process"/>
    <property type="evidence" value="ECO:0007669"/>
    <property type="project" value="UniProtKB-UniRule"/>
</dbReference>
<dbReference type="GO" id="GO:0009245">
    <property type="term" value="P:lipid A biosynthetic process"/>
    <property type="evidence" value="ECO:0007669"/>
    <property type="project" value="UniProtKB-UniRule"/>
</dbReference>
<dbReference type="CDD" id="cd01288">
    <property type="entry name" value="FabZ"/>
    <property type="match status" value="1"/>
</dbReference>
<dbReference type="FunFam" id="3.10.129.10:FF:000001">
    <property type="entry name" value="3-hydroxyacyl-[acyl-carrier-protein] dehydratase FabZ"/>
    <property type="match status" value="1"/>
</dbReference>
<dbReference type="Gene3D" id="3.10.129.10">
    <property type="entry name" value="Hotdog Thioesterase"/>
    <property type="match status" value="1"/>
</dbReference>
<dbReference type="HAMAP" id="MF_00406">
    <property type="entry name" value="FabZ"/>
    <property type="match status" value="1"/>
</dbReference>
<dbReference type="InterPro" id="IPR013114">
    <property type="entry name" value="FabA_FabZ"/>
</dbReference>
<dbReference type="InterPro" id="IPR010084">
    <property type="entry name" value="FabZ"/>
</dbReference>
<dbReference type="InterPro" id="IPR029069">
    <property type="entry name" value="HotDog_dom_sf"/>
</dbReference>
<dbReference type="NCBIfam" id="TIGR01750">
    <property type="entry name" value="fabZ"/>
    <property type="match status" value="1"/>
</dbReference>
<dbReference type="NCBIfam" id="NF000582">
    <property type="entry name" value="PRK00006.1"/>
    <property type="match status" value="1"/>
</dbReference>
<dbReference type="PANTHER" id="PTHR30272">
    <property type="entry name" value="3-HYDROXYACYL-[ACYL-CARRIER-PROTEIN] DEHYDRATASE"/>
    <property type="match status" value="1"/>
</dbReference>
<dbReference type="PANTHER" id="PTHR30272:SF1">
    <property type="entry name" value="3-HYDROXYACYL-[ACYL-CARRIER-PROTEIN] DEHYDRATASE"/>
    <property type="match status" value="1"/>
</dbReference>
<dbReference type="Pfam" id="PF07977">
    <property type="entry name" value="FabA"/>
    <property type="match status" value="1"/>
</dbReference>
<dbReference type="SUPFAM" id="SSF54637">
    <property type="entry name" value="Thioesterase/thiol ester dehydrase-isomerase"/>
    <property type="match status" value="1"/>
</dbReference>
<organism>
    <name type="scientific">Roseobacter denitrificans (strain ATCC 33942 / OCh 114)</name>
    <name type="common">Erythrobacter sp. (strain OCh 114)</name>
    <name type="synonym">Roseobacter denitrificans</name>
    <dbReference type="NCBI Taxonomy" id="375451"/>
    <lineage>
        <taxon>Bacteria</taxon>
        <taxon>Pseudomonadati</taxon>
        <taxon>Pseudomonadota</taxon>
        <taxon>Alphaproteobacteria</taxon>
        <taxon>Rhodobacterales</taxon>
        <taxon>Roseobacteraceae</taxon>
        <taxon>Roseobacter</taxon>
    </lineage>
</organism>
<protein>
    <recommendedName>
        <fullName evidence="1">3-hydroxyacyl-[acyl-carrier-protein] dehydratase FabZ</fullName>
        <ecNumber evidence="1">4.2.1.59</ecNumber>
    </recommendedName>
    <alternativeName>
        <fullName evidence="1">(3R)-hydroxymyristoyl-[acyl-carrier-protein] dehydratase</fullName>
        <shortName evidence="1">(3R)-hydroxymyristoyl-ACP dehydrase</shortName>
    </alternativeName>
    <alternativeName>
        <fullName evidence="1">Beta-hydroxyacyl-ACP dehydratase</fullName>
    </alternativeName>
</protein>
<evidence type="ECO:0000255" key="1">
    <source>
        <dbReference type="HAMAP-Rule" id="MF_00406"/>
    </source>
</evidence>
<feature type="chain" id="PRO_0000301922" description="3-hydroxyacyl-[acyl-carrier-protein] dehydratase FabZ">
    <location>
        <begin position="1"/>
        <end position="152"/>
    </location>
</feature>
<feature type="active site" evidence="1">
    <location>
        <position position="54"/>
    </location>
</feature>
<reference key="1">
    <citation type="journal article" date="2007" name="J. Bacteriol.">
        <title>The complete genome sequence of Roseobacter denitrificans reveals a mixotrophic rather than photosynthetic metabolism.</title>
        <authorList>
            <person name="Swingley W.D."/>
            <person name="Sadekar S."/>
            <person name="Mastrian S.D."/>
            <person name="Matthies H.J."/>
            <person name="Hao J."/>
            <person name="Ramos H."/>
            <person name="Acharya C.R."/>
            <person name="Conrad A.L."/>
            <person name="Taylor H.L."/>
            <person name="Dejesa L.C."/>
            <person name="Shah M.K."/>
            <person name="O'Huallachain M.E."/>
            <person name="Lince M.T."/>
            <person name="Blankenship R.E."/>
            <person name="Beatty J.T."/>
            <person name="Touchman J.W."/>
        </authorList>
    </citation>
    <scope>NUCLEOTIDE SEQUENCE [LARGE SCALE GENOMIC DNA]</scope>
    <source>
        <strain>ATCC 33942 / OCh 114</strain>
    </source>
</reference>
<comment type="function">
    <text evidence="1">Involved in unsaturated fatty acids biosynthesis. Catalyzes the dehydration of short chain beta-hydroxyacyl-ACPs and long chain saturated and unsaturated beta-hydroxyacyl-ACPs.</text>
</comment>
<comment type="catalytic activity">
    <reaction evidence="1">
        <text>a (3R)-hydroxyacyl-[ACP] = a (2E)-enoyl-[ACP] + H2O</text>
        <dbReference type="Rhea" id="RHEA:13097"/>
        <dbReference type="Rhea" id="RHEA-COMP:9925"/>
        <dbReference type="Rhea" id="RHEA-COMP:9945"/>
        <dbReference type="ChEBI" id="CHEBI:15377"/>
        <dbReference type="ChEBI" id="CHEBI:78784"/>
        <dbReference type="ChEBI" id="CHEBI:78827"/>
        <dbReference type="EC" id="4.2.1.59"/>
    </reaction>
</comment>
<comment type="subcellular location">
    <subcellularLocation>
        <location evidence="1">Cytoplasm</location>
    </subcellularLocation>
</comment>
<comment type="similarity">
    <text evidence="1">Belongs to the thioester dehydratase family. FabZ subfamily.</text>
</comment>
<accession>Q166E7</accession>
<name>FABZ_ROSDO</name>
<gene>
    <name evidence="1" type="primary">fabZ</name>
    <name type="ordered locus">RD1_2595</name>
</gene>
<keyword id="KW-0963">Cytoplasm</keyword>
<keyword id="KW-0441">Lipid A biosynthesis</keyword>
<keyword id="KW-0444">Lipid biosynthesis</keyword>
<keyword id="KW-0443">Lipid metabolism</keyword>
<keyword id="KW-0456">Lyase</keyword>
<keyword id="KW-1185">Reference proteome</keyword>
<proteinExistence type="inferred from homology"/>